<proteinExistence type="evidence at transcript level"/>
<dbReference type="EMBL" id="BC093556">
    <property type="protein sequence ID" value="AAH93556.1"/>
    <property type="molecule type" value="mRNA"/>
</dbReference>
<dbReference type="EMBL" id="X54684">
    <property type="protein sequence ID" value="CAA38498.1"/>
    <property type="molecule type" value="mRNA"/>
</dbReference>
<dbReference type="RefSeq" id="NP_001096655.1">
    <property type="nucleotide sequence ID" value="NM_001103185.1"/>
</dbReference>
<dbReference type="SMR" id="Q561L5"/>
<dbReference type="DNASU" id="378582"/>
<dbReference type="GeneID" id="378582"/>
<dbReference type="KEGG" id="xla:378582"/>
<dbReference type="AGR" id="Xenbase:XB-GENE-866479"/>
<dbReference type="CTD" id="378582"/>
<dbReference type="Xenbase" id="XB-GENE-866479">
    <property type="gene designation" value="pou3f1.L"/>
</dbReference>
<dbReference type="OrthoDB" id="6358449at2759"/>
<dbReference type="Proteomes" id="UP000186698">
    <property type="component" value="Chromosome 2L"/>
</dbReference>
<dbReference type="Bgee" id="378582">
    <property type="expression patterns" value="Expressed in zone of skin and 5 other cell types or tissues"/>
</dbReference>
<dbReference type="GO" id="GO:0005634">
    <property type="term" value="C:nucleus"/>
    <property type="evidence" value="ECO:0007669"/>
    <property type="project" value="UniProtKB-SubCell"/>
</dbReference>
<dbReference type="GO" id="GO:0000981">
    <property type="term" value="F:DNA-binding transcription factor activity, RNA polymerase II-specific"/>
    <property type="evidence" value="ECO:0000318"/>
    <property type="project" value="GO_Central"/>
</dbReference>
<dbReference type="GO" id="GO:0000978">
    <property type="term" value="F:RNA polymerase II cis-regulatory region sequence-specific DNA binding"/>
    <property type="evidence" value="ECO:0000318"/>
    <property type="project" value="GO_Central"/>
</dbReference>
<dbReference type="GO" id="GO:0007420">
    <property type="term" value="P:brain development"/>
    <property type="evidence" value="ECO:0007669"/>
    <property type="project" value="InterPro"/>
</dbReference>
<dbReference type="GO" id="GO:0006357">
    <property type="term" value="P:regulation of transcription by RNA polymerase II"/>
    <property type="evidence" value="ECO:0000318"/>
    <property type="project" value="GO_Central"/>
</dbReference>
<dbReference type="CDD" id="cd00086">
    <property type="entry name" value="homeodomain"/>
    <property type="match status" value="1"/>
</dbReference>
<dbReference type="FunFam" id="1.10.10.60:FF:000005">
    <property type="entry name" value="POU domain protein"/>
    <property type="match status" value="1"/>
</dbReference>
<dbReference type="FunFam" id="1.10.260.40:FF:000001">
    <property type="entry name" value="POU domain protein"/>
    <property type="match status" value="1"/>
</dbReference>
<dbReference type="Gene3D" id="1.10.10.60">
    <property type="entry name" value="Homeodomain-like"/>
    <property type="match status" value="1"/>
</dbReference>
<dbReference type="Gene3D" id="1.10.260.40">
    <property type="entry name" value="lambda repressor-like DNA-binding domains"/>
    <property type="match status" value="1"/>
</dbReference>
<dbReference type="InterPro" id="IPR001356">
    <property type="entry name" value="HD"/>
</dbReference>
<dbReference type="InterPro" id="IPR017970">
    <property type="entry name" value="Homeobox_CS"/>
</dbReference>
<dbReference type="InterPro" id="IPR009057">
    <property type="entry name" value="Homeodomain-like_sf"/>
</dbReference>
<dbReference type="InterPro" id="IPR010982">
    <property type="entry name" value="Lambda_DNA-bd_dom_sf"/>
</dbReference>
<dbReference type="InterPro" id="IPR013847">
    <property type="entry name" value="POU"/>
</dbReference>
<dbReference type="InterPro" id="IPR000327">
    <property type="entry name" value="POU_dom"/>
</dbReference>
<dbReference type="InterPro" id="IPR050255">
    <property type="entry name" value="POU_domain_TF"/>
</dbReference>
<dbReference type="InterPro" id="IPR016362">
    <property type="entry name" value="TF_POU_3"/>
</dbReference>
<dbReference type="PANTHER" id="PTHR11636">
    <property type="entry name" value="POU DOMAIN"/>
    <property type="match status" value="1"/>
</dbReference>
<dbReference type="PANTHER" id="PTHR11636:SF75">
    <property type="entry name" value="POU DOMAIN, CLASS 3, TRANSCRIPTION FACTOR 1"/>
    <property type="match status" value="1"/>
</dbReference>
<dbReference type="Pfam" id="PF00046">
    <property type="entry name" value="Homeodomain"/>
    <property type="match status" value="1"/>
</dbReference>
<dbReference type="Pfam" id="PF00157">
    <property type="entry name" value="Pou"/>
    <property type="match status" value="1"/>
</dbReference>
<dbReference type="PIRSF" id="PIRSF002629">
    <property type="entry name" value="Transcription_factor_POU"/>
    <property type="match status" value="1"/>
</dbReference>
<dbReference type="PRINTS" id="PR00028">
    <property type="entry name" value="POUDOMAIN"/>
</dbReference>
<dbReference type="SMART" id="SM00389">
    <property type="entry name" value="HOX"/>
    <property type="match status" value="1"/>
</dbReference>
<dbReference type="SMART" id="SM00352">
    <property type="entry name" value="POU"/>
    <property type="match status" value="1"/>
</dbReference>
<dbReference type="SUPFAM" id="SSF46689">
    <property type="entry name" value="Homeodomain-like"/>
    <property type="match status" value="1"/>
</dbReference>
<dbReference type="SUPFAM" id="SSF47413">
    <property type="entry name" value="lambda repressor-like DNA-binding domains"/>
    <property type="match status" value="1"/>
</dbReference>
<dbReference type="PROSITE" id="PS00027">
    <property type="entry name" value="HOMEOBOX_1"/>
    <property type="match status" value="1"/>
</dbReference>
<dbReference type="PROSITE" id="PS50071">
    <property type="entry name" value="HOMEOBOX_2"/>
    <property type="match status" value="1"/>
</dbReference>
<dbReference type="PROSITE" id="PS00035">
    <property type="entry name" value="POU_1"/>
    <property type="match status" value="1"/>
</dbReference>
<dbReference type="PROSITE" id="PS00465">
    <property type="entry name" value="POU_2"/>
    <property type="match status" value="1"/>
</dbReference>
<dbReference type="PROSITE" id="PS51179">
    <property type="entry name" value="POU_3"/>
    <property type="match status" value="1"/>
</dbReference>
<accession>Q561L5</accession>
<sequence>MAATAQYLPRNNSLPSNPLMHPDSDRMHQGTTYREVQKMMHQEYLQGLATNAGHPMSLTHHQWLPNPTSDWGSGSHLGAQAEHGKSGVQSSREDLSSSFHHHRSHLVHQQTPSSHAWAQSGGHHLPSMSPGSNSHQPLIYSQSSYTNLNGMLGPQASSLHHSMRDPLHDDPGVHDTHVESPPQHLGHHQDHSDEDAPSSDDLEQFAKQFKQRRIKLGFTQADVGLALGTLYGNVFSQTTICRFEALQLSFKNMCKLKPLLNKWLEETDSTTGSPTNLDKIAAQGRKRKKRTSIEVGVKGALENHFLKCPKPSAHEITSLADSLQLEKEVVRVWFCNRRQKEKRMTPAGVPHPPMEDVYSQAETPPLHHTLQTSVQ</sequence>
<evidence type="ECO:0000250" key="1">
    <source>
        <dbReference type="UniProtKB" id="P21952"/>
    </source>
</evidence>
<evidence type="ECO:0000250" key="2">
    <source>
        <dbReference type="UniProtKB" id="P31361"/>
    </source>
</evidence>
<evidence type="ECO:0000250" key="3">
    <source>
        <dbReference type="UniProtKB" id="P31363"/>
    </source>
</evidence>
<evidence type="ECO:0000255" key="4"/>
<evidence type="ECO:0000255" key="5">
    <source>
        <dbReference type="PROSITE-ProRule" id="PRU00108"/>
    </source>
</evidence>
<evidence type="ECO:0000255" key="6">
    <source>
        <dbReference type="PROSITE-ProRule" id="PRU00530"/>
    </source>
</evidence>
<evidence type="ECO:0000256" key="7">
    <source>
        <dbReference type="SAM" id="MobiDB-lite"/>
    </source>
</evidence>
<evidence type="ECO:0000269" key="8">
    <source>
    </source>
</evidence>
<evidence type="ECO:0000303" key="9">
    <source>
    </source>
</evidence>
<evidence type="ECO:0000305" key="10"/>
<evidence type="ECO:0000312" key="11">
    <source>
        <dbReference type="EMBL" id="AAH93556.1"/>
    </source>
</evidence>
<organism>
    <name type="scientific">Xenopus laevis</name>
    <name type="common">African clawed frog</name>
    <dbReference type="NCBI Taxonomy" id="8355"/>
    <lineage>
        <taxon>Eukaryota</taxon>
        <taxon>Metazoa</taxon>
        <taxon>Chordata</taxon>
        <taxon>Craniata</taxon>
        <taxon>Vertebrata</taxon>
        <taxon>Euteleostomi</taxon>
        <taxon>Amphibia</taxon>
        <taxon>Batrachia</taxon>
        <taxon>Anura</taxon>
        <taxon>Pipoidea</taxon>
        <taxon>Pipidae</taxon>
        <taxon>Xenopodinae</taxon>
        <taxon>Xenopus</taxon>
        <taxon>Xenopus</taxon>
    </lineage>
</organism>
<name>P3F1B_XENLA</name>
<gene>
    <name type="primary">pou3f1-b</name>
    <name evidence="9" type="synonym">nrl-34</name>
    <name type="synonym">nrl34-a</name>
</gene>
<comment type="function">
    <text evidence="1 3">Acts as a transcription factor (By similarity). May play a role in neuronal differentiation (By similarity).</text>
</comment>
<comment type="subcellular location">
    <subcellularLocation>
        <location evidence="2 5 6">Nucleus</location>
    </subcellularLocation>
</comment>
<comment type="similarity">
    <text evidence="4">Belongs to the POU transcription factor family. Class-3 subfamily.</text>
</comment>
<reference evidence="11" key="1">
    <citation type="submission" date="2005-04" db="EMBL/GenBank/DDBJ databases">
        <authorList>
            <consortium name="NIH - Xenopus Gene Collection (XGC) project"/>
        </authorList>
    </citation>
    <scope>NUCLEOTIDE SEQUENCE [LARGE SCALE MRNA]</scope>
    <source>
        <tissue evidence="11">Eye</tissue>
    </source>
</reference>
<reference evidence="10" key="2">
    <citation type="journal article" date="1990" name="Nucleic Acids Res.">
        <title>Cloning and sequencing of POU-boxes expressed in Xenopus laevis neurula embryos.</title>
        <authorList>
            <person name="Baltzinger M."/>
            <person name="Stiegler P."/>
            <person name="Remy P."/>
        </authorList>
    </citation>
    <scope>NUCLEOTIDE SEQUENCE [MRNA] OF 220-324</scope>
    <source>
        <tissue evidence="8">Neurula</tissue>
    </source>
</reference>
<keyword id="KW-0217">Developmental protein</keyword>
<keyword id="KW-0238">DNA-binding</keyword>
<keyword id="KW-0371">Homeobox</keyword>
<keyword id="KW-0524">Neurogenesis</keyword>
<keyword id="KW-0539">Nucleus</keyword>
<keyword id="KW-1185">Reference proteome</keyword>
<keyword id="KW-0804">Transcription</keyword>
<keyword id="KW-0805">Transcription regulation</keyword>
<protein>
    <recommendedName>
        <fullName>POU domain, class 3, transcription factor 1-B</fullName>
    </recommendedName>
    <alternativeName>
        <fullName evidence="9">Homeotic protein NRL-34</fullName>
        <shortName>XlNRL-34</shortName>
    </alternativeName>
    <alternativeName>
        <fullName>Homeotic protein NRL-34-A</fullName>
    </alternativeName>
</protein>
<feature type="chain" id="PRO_0000389614" description="POU domain, class 3, transcription factor 1-B">
    <location>
        <begin position="1"/>
        <end position="375"/>
    </location>
</feature>
<feature type="domain" description="POU-specific" evidence="6">
    <location>
        <begin position="194"/>
        <end position="268"/>
    </location>
</feature>
<feature type="DNA-binding region" description="Homeobox" evidence="5">
    <location>
        <begin position="286"/>
        <end position="345"/>
    </location>
</feature>
<feature type="region of interest" description="Disordered" evidence="7">
    <location>
        <begin position="1"/>
        <end position="29"/>
    </location>
</feature>
<feature type="region of interest" description="Disordered" evidence="7">
    <location>
        <begin position="56"/>
        <end position="139"/>
    </location>
</feature>
<feature type="region of interest" description="Disordered" evidence="7">
    <location>
        <begin position="151"/>
        <end position="200"/>
    </location>
</feature>
<feature type="compositionally biased region" description="Polar residues" evidence="7">
    <location>
        <begin position="107"/>
        <end position="117"/>
    </location>
</feature>
<feature type="compositionally biased region" description="Polar residues" evidence="7">
    <location>
        <begin position="129"/>
        <end position="139"/>
    </location>
</feature>
<feature type="compositionally biased region" description="Polar residues" evidence="7">
    <location>
        <begin position="151"/>
        <end position="160"/>
    </location>
</feature>
<feature type="compositionally biased region" description="Basic and acidic residues" evidence="7">
    <location>
        <begin position="162"/>
        <end position="178"/>
    </location>
</feature>